<sequence>MNTALAQQIANEGGVEAWMIAQQHKSLLRFLTCGSVDDGKSTLIGRLLHDTRQIYEDQLSSLHNDSKRHGTQGEKLDLALLVDGLQAEREQGITIDVAYRYFSTEKRKFIIADTPGHEQYTRNMATGASTCELAILLIDARKGVLDQTRRHSFISTLLGIKHLVVAINKMDLVDYSEETFTRIREDYLTFAGQLPGNLDIRFVPLSALEGDNVASQSESMSWYSGPTLLEVLETVEIQRVVDAQPMRFPVQYVNRPNLDFRGYAGTLASGRVEVGQRVKVLPSGVESNVARIVTFDGDREEAFAGEAITLVLTDEIDISRGDLLLAADEALPAVQSASVDVVWMAEQPLSPGQSYDIKIAGKKTRARVDGIRYQVDINNLTQREVENLPLNGIGLVDLTFDEPLVLDRYQQNPVTGGLIFIDRLSNVTVGAGMVHEPKNEAAVASSEFSAFELELNALVRRHFPHWGARDLLGDK</sequence>
<accession>B2TZI0</accession>
<dbReference type="EC" id="2.7.7.4" evidence="2"/>
<dbReference type="EMBL" id="CP001063">
    <property type="protein sequence ID" value="ACD07116.1"/>
    <property type="molecule type" value="Genomic_DNA"/>
</dbReference>
<dbReference type="RefSeq" id="WP_001090376.1">
    <property type="nucleotide sequence ID" value="NC_010658.1"/>
</dbReference>
<dbReference type="SMR" id="B2TZI0"/>
<dbReference type="STRING" id="344609.SbBS512_E3123"/>
<dbReference type="KEGG" id="sbc:SbBS512_E3123"/>
<dbReference type="HOGENOM" id="CLU_007265_5_2_6"/>
<dbReference type="UniPathway" id="UPA00140">
    <property type="reaction ID" value="UER00204"/>
</dbReference>
<dbReference type="Proteomes" id="UP000001030">
    <property type="component" value="Chromosome"/>
</dbReference>
<dbReference type="GO" id="GO:0005524">
    <property type="term" value="F:ATP binding"/>
    <property type="evidence" value="ECO:0007669"/>
    <property type="project" value="UniProtKB-KW"/>
</dbReference>
<dbReference type="GO" id="GO:0005525">
    <property type="term" value="F:GTP binding"/>
    <property type="evidence" value="ECO:0007669"/>
    <property type="project" value="UniProtKB-UniRule"/>
</dbReference>
<dbReference type="GO" id="GO:0003924">
    <property type="term" value="F:GTPase activity"/>
    <property type="evidence" value="ECO:0007669"/>
    <property type="project" value="InterPro"/>
</dbReference>
<dbReference type="GO" id="GO:0004781">
    <property type="term" value="F:sulfate adenylyltransferase (ATP) activity"/>
    <property type="evidence" value="ECO:0007669"/>
    <property type="project" value="UniProtKB-UniRule"/>
</dbReference>
<dbReference type="GO" id="GO:0070814">
    <property type="term" value="P:hydrogen sulfide biosynthetic process"/>
    <property type="evidence" value="ECO:0007669"/>
    <property type="project" value="UniProtKB-UniRule"/>
</dbReference>
<dbReference type="GO" id="GO:0000103">
    <property type="term" value="P:sulfate assimilation"/>
    <property type="evidence" value="ECO:0007669"/>
    <property type="project" value="UniProtKB-UniRule"/>
</dbReference>
<dbReference type="CDD" id="cd04166">
    <property type="entry name" value="CysN_ATPS"/>
    <property type="match status" value="1"/>
</dbReference>
<dbReference type="CDD" id="cd03695">
    <property type="entry name" value="CysN_NodQ_II"/>
    <property type="match status" value="1"/>
</dbReference>
<dbReference type="CDD" id="cd04095">
    <property type="entry name" value="CysN_NoDQ_III"/>
    <property type="match status" value="1"/>
</dbReference>
<dbReference type="FunFam" id="2.40.30.10:FF:000027">
    <property type="entry name" value="Sulfate adenylyltransferase subunit 1"/>
    <property type="match status" value="1"/>
</dbReference>
<dbReference type="FunFam" id="2.40.30.10:FF:000031">
    <property type="entry name" value="Sulfate adenylyltransferase subunit 1"/>
    <property type="match status" value="1"/>
</dbReference>
<dbReference type="FunFam" id="3.40.50.300:FF:000119">
    <property type="entry name" value="Sulfate adenylyltransferase subunit 1"/>
    <property type="match status" value="1"/>
</dbReference>
<dbReference type="Gene3D" id="3.40.50.300">
    <property type="entry name" value="P-loop containing nucleotide triphosphate hydrolases"/>
    <property type="match status" value="1"/>
</dbReference>
<dbReference type="Gene3D" id="2.40.30.10">
    <property type="entry name" value="Translation factors"/>
    <property type="match status" value="2"/>
</dbReference>
<dbReference type="HAMAP" id="MF_00062">
    <property type="entry name" value="Sulf_adenylyltr_sub1"/>
    <property type="match status" value="1"/>
</dbReference>
<dbReference type="InterPro" id="IPR041757">
    <property type="entry name" value="CysN_GTP-bd"/>
</dbReference>
<dbReference type="InterPro" id="IPR044138">
    <property type="entry name" value="CysN_II"/>
</dbReference>
<dbReference type="InterPro" id="IPR044139">
    <property type="entry name" value="CysN_NoDQ_III"/>
</dbReference>
<dbReference type="InterPro" id="IPR031157">
    <property type="entry name" value="G_TR_CS"/>
</dbReference>
<dbReference type="InterPro" id="IPR054696">
    <property type="entry name" value="GTP-eEF1A_C"/>
</dbReference>
<dbReference type="InterPro" id="IPR027417">
    <property type="entry name" value="P-loop_NTPase"/>
</dbReference>
<dbReference type="InterPro" id="IPR005225">
    <property type="entry name" value="Small_GTP-bd"/>
</dbReference>
<dbReference type="InterPro" id="IPR011779">
    <property type="entry name" value="SO4_adenylTrfase_lsu"/>
</dbReference>
<dbReference type="InterPro" id="IPR000795">
    <property type="entry name" value="T_Tr_GTP-bd_dom"/>
</dbReference>
<dbReference type="InterPro" id="IPR050100">
    <property type="entry name" value="TRAFAC_GTPase_members"/>
</dbReference>
<dbReference type="InterPro" id="IPR009000">
    <property type="entry name" value="Transl_B-barrel_sf"/>
</dbReference>
<dbReference type="InterPro" id="IPR009001">
    <property type="entry name" value="Transl_elong_EF1A/Init_IF2_C"/>
</dbReference>
<dbReference type="NCBIfam" id="TIGR02034">
    <property type="entry name" value="CysN"/>
    <property type="match status" value="1"/>
</dbReference>
<dbReference type="NCBIfam" id="NF003478">
    <property type="entry name" value="PRK05124.1"/>
    <property type="match status" value="1"/>
</dbReference>
<dbReference type="NCBIfam" id="TIGR00231">
    <property type="entry name" value="small_GTP"/>
    <property type="match status" value="1"/>
</dbReference>
<dbReference type="PANTHER" id="PTHR23115">
    <property type="entry name" value="TRANSLATION FACTOR"/>
    <property type="match status" value="1"/>
</dbReference>
<dbReference type="Pfam" id="PF22594">
    <property type="entry name" value="GTP-eEF1A_C"/>
    <property type="match status" value="1"/>
</dbReference>
<dbReference type="Pfam" id="PF00009">
    <property type="entry name" value="GTP_EFTU"/>
    <property type="match status" value="1"/>
</dbReference>
<dbReference type="PRINTS" id="PR00315">
    <property type="entry name" value="ELONGATNFCT"/>
</dbReference>
<dbReference type="SUPFAM" id="SSF50465">
    <property type="entry name" value="EF-Tu/eEF-1alpha/eIF2-gamma C-terminal domain"/>
    <property type="match status" value="1"/>
</dbReference>
<dbReference type="SUPFAM" id="SSF52540">
    <property type="entry name" value="P-loop containing nucleoside triphosphate hydrolases"/>
    <property type="match status" value="1"/>
</dbReference>
<dbReference type="SUPFAM" id="SSF50447">
    <property type="entry name" value="Translation proteins"/>
    <property type="match status" value="1"/>
</dbReference>
<dbReference type="PROSITE" id="PS00301">
    <property type="entry name" value="G_TR_1"/>
    <property type="match status" value="1"/>
</dbReference>
<dbReference type="PROSITE" id="PS51722">
    <property type="entry name" value="G_TR_2"/>
    <property type="match status" value="1"/>
</dbReference>
<comment type="function">
    <text evidence="2">With CysD forms the ATP sulfurylase (ATPS) that catalyzes the adenylation of sulfate producing adenosine 5'-phosphosulfate (APS) and diphosphate, the first enzymatic step in sulfur assimilation pathway. APS synthesis involves the formation of a high-energy phosphoric-sulfuric acid anhydride bond driven by GTP hydrolysis by CysN coupled to ATP hydrolysis by CysD.</text>
</comment>
<comment type="catalytic activity">
    <reaction evidence="2">
        <text>sulfate + ATP + H(+) = adenosine 5'-phosphosulfate + diphosphate</text>
        <dbReference type="Rhea" id="RHEA:18133"/>
        <dbReference type="ChEBI" id="CHEBI:15378"/>
        <dbReference type="ChEBI" id="CHEBI:16189"/>
        <dbReference type="ChEBI" id="CHEBI:30616"/>
        <dbReference type="ChEBI" id="CHEBI:33019"/>
        <dbReference type="ChEBI" id="CHEBI:58243"/>
        <dbReference type="EC" id="2.7.7.4"/>
    </reaction>
</comment>
<comment type="pathway">
    <text evidence="2">Sulfur metabolism; hydrogen sulfide biosynthesis; sulfite from sulfate: step 1/3.</text>
</comment>
<comment type="subunit">
    <text evidence="2">Heterodimer composed of CysD, the smaller subunit, and CysN.</text>
</comment>
<comment type="similarity">
    <text evidence="2">Belongs to the TRAFAC class translation factor GTPase superfamily. Classic translation factor GTPase family. CysN/NodQ subfamily.</text>
</comment>
<name>CYSN_SHIB3</name>
<keyword id="KW-0067">ATP-binding</keyword>
<keyword id="KW-0342">GTP-binding</keyword>
<keyword id="KW-0547">Nucleotide-binding</keyword>
<keyword id="KW-0548">Nucleotidyltransferase</keyword>
<keyword id="KW-1185">Reference proteome</keyword>
<keyword id="KW-0808">Transferase</keyword>
<proteinExistence type="inferred from homology"/>
<evidence type="ECO:0000250" key="1"/>
<evidence type="ECO:0000255" key="2">
    <source>
        <dbReference type="HAMAP-Rule" id="MF_00062"/>
    </source>
</evidence>
<protein>
    <recommendedName>
        <fullName evidence="2">Sulfate adenylyltransferase subunit 1</fullName>
        <ecNumber evidence="2">2.7.7.4</ecNumber>
    </recommendedName>
    <alternativeName>
        <fullName evidence="2">ATP-sulfurylase large subunit</fullName>
    </alternativeName>
    <alternativeName>
        <fullName evidence="2">Sulfate adenylate transferase</fullName>
        <shortName evidence="2">SAT</shortName>
    </alternativeName>
</protein>
<gene>
    <name evidence="2" type="primary">cysN</name>
    <name type="ordered locus">SbBS512_E3123</name>
</gene>
<reference key="1">
    <citation type="submission" date="2008-05" db="EMBL/GenBank/DDBJ databases">
        <title>Complete sequence of Shigella boydii serotype 18 strain BS512.</title>
        <authorList>
            <person name="Rasko D.A."/>
            <person name="Rosovitz M."/>
            <person name="Maurelli A.T."/>
            <person name="Myers G."/>
            <person name="Seshadri R."/>
            <person name="Cer R."/>
            <person name="Jiang L."/>
            <person name="Ravel J."/>
            <person name="Sebastian Y."/>
        </authorList>
    </citation>
    <scope>NUCLEOTIDE SEQUENCE [LARGE SCALE GENOMIC DNA]</scope>
    <source>
        <strain>CDC 3083-94 / BS512</strain>
    </source>
</reference>
<organism>
    <name type="scientific">Shigella boydii serotype 18 (strain CDC 3083-94 / BS512)</name>
    <dbReference type="NCBI Taxonomy" id="344609"/>
    <lineage>
        <taxon>Bacteria</taxon>
        <taxon>Pseudomonadati</taxon>
        <taxon>Pseudomonadota</taxon>
        <taxon>Gammaproteobacteria</taxon>
        <taxon>Enterobacterales</taxon>
        <taxon>Enterobacteriaceae</taxon>
        <taxon>Shigella</taxon>
    </lineage>
</organism>
<feature type="chain" id="PRO_1000092160" description="Sulfate adenylyltransferase subunit 1">
    <location>
        <begin position="1"/>
        <end position="475"/>
    </location>
</feature>
<feature type="domain" description="tr-type G">
    <location>
        <begin position="25"/>
        <end position="239"/>
    </location>
</feature>
<feature type="region of interest" description="G1" evidence="1">
    <location>
        <begin position="34"/>
        <end position="41"/>
    </location>
</feature>
<feature type="region of interest" description="G2" evidence="1">
    <location>
        <begin position="92"/>
        <end position="96"/>
    </location>
</feature>
<feature type="region of interest" description="G3" evidence="1">
    <location>
        <begin position="113"/>
        <end position="116"/>
    </location>
</feature>
<feature type="region of interest" description="G4" evidence="1">
    <location>
        <begin position="168"/>
        <end position="171"/>
    </location>
</feature>
<feature type="region of interest" description="G5" evidence="1">
    <location>
        <begin position="206"/>
        <end position="208"/>
    </location>
</feature>
<feature type="binding site" evidence="2">
    <location>
        <begin position="34"/>
        <end position="41"/>
    </location>
    <ligand>
        <name>GTP</name>
        <dbReference type="ChEBI" id="CHEBI:37565"/>
    </ligand>
</feature>
<feature type="binding site" evidence="2">
    <location>
        <begin position="113"/>
        <end position="117"/>
    </location>
    <ligand>
        <name>GTP</name>
        <dbReference type="ChEBI" id="CHEBI:37565"/>
    </ligand>
</feature>
<feature type="binding site" evidence="2">
    <location>
        <begin position="168"/>
        <end position="171"/>
    </location>
    <ligand>
        <name>GTP</name>
        <dbReference type="ChEBI" id="CHEBI:37565"/>
    </ligand>
</feature>